<comment type="function">
    <text evidence="3 4">Effector that suppresses plant defense responses during the early stages of pathogen infection. Suppresses cell death induced by effectors and PAMPs in plant hosts (PubMed:21653195). Avh240 dimerizes and localizes at the plasma membrane to interfere with aspartic protease AP1 secretion, which presents an effective mechanism by which effector proteins suppress plant apoplastic immunity (PubMed:30703565).</text>
</comment>
<comment type="subunit">
    <text evidence="1 4">Homodimer (By similarity). Interacts with host soybean aspartic protease AP1 (PubMed:30703565).</text>
</comment>
<comment type="subcellular location">
    <subcellularLocation>
        <location evidence="4">Secreted</location>
    </subcellularLocation>
    <subcellularLocation>
        <location evidence="4">Host cell membrane</location>
    </subcellularLocation>
    <text evidence="4">Plasma membrane localization is independent on self-dimerization but required for virulence.</text>
</comment>
<comment type="domain">
    <text evidence="7">The RxLR-dEER motif acts to carry the protein into the host cell cytoplasm through binding to cell surface phosphatidylinositol-3-phosphate.</text>
</comment>
<comment type="domain">
    <text evidence="1">The alpha 1 and alpha 2 helices (residues 58-108) are required for the localization the plasma membrane.</text>
</comment>
<comment type="similarity">
    <text evidence="6">Belongs to the RxLR effector family.</text>
</comment>
<reference key="1">
    <citation type="journal article" date="2006" name="Science">
        <title>Phytophthora genome sequences uncover evolutionary origins and mechanisms of pathogenesis.</title>
        <authorList>
            <person name="Tyler B.M."/>
            <person name="Tripathy S."/>
            <person name="Zhang X."/>
            <person name="Dehal P."/>
            <person name="Jiang R.H.Y."/>
            <person name="Aerts A."/>
            <person name="Arredondo F.D."/>
            <person name="Baxter L."/>
            <person name="Bensasson D."/>
            <person name="Beynon J.L."/>
            <person name="Chapman J."/>
            <person name="Damasceno C.M.B."/>
            <person name="Dorrance A.E."/>
            <person name="Dou D."/>
            <person name="Dickerman A.W."/>
            <person name="Dubchak I.L."/>
            <person name="Garbelotto M."/>
            <person name="Gijzen M."/>
            <person name="Gordon S.G."/>
            <person name="Govers F."/>
            <person name="Grunwald N.J."/>
            <person name="Huang W."/>
            <person name="Ivors K.L."/>
            <person name="Jones R.W."/>
            <person name="Kamoun S."/>
            <person name="Krampis K."/>
            <person name="Lamour K.H."/>
            <person name="Lee M.-K."/>
            <person name="McDonald W.H."/>
            <person name="Medina M."/>
            <person name="Meijer H.J.G."/>
            <person name="Nordberg E.K."/>
            <person name="Maclean D.J."/>
            <person name="Ospina-Giraldo M.D."/>
            <person name="Morris P.F."/>
            <person name="Phuntumart V."/>
            <person name="Putnam N.H."/>
            <person name="Rash S."/>
            <person name="Rose J.K.C."/>
            <person name="Sakihama Y."/>
            <person name="Salamov A.A."/>
            <person name="Savidor A."/>
            <person name="Scheuring C.F."/>
            <person name="Smith B.M."/>
            <person name="Sobral B.W.S."/>
            <person name="Terry A."/>
            <person name="Torto-Alalibo T.A."/>
            <person name="Win J."/>
            <person name="Xu Z."/>
            <person name="Zhang H."/>
            <person name="Grigoriev I.V."/>
            <person name="Rokhsar D.S."/>
            <person name="Boore J.L."/>
        </authorList>
    </citation>
    <scope>NUCLEOTIDE SEQUENCE [LARGE SCALE GENOMIC DNA]</scope>
    <source>
        <strain>P6497</strain>
    </source>
</reference>
<reference key="2">
    <citation type="journal article" date="2011" name="Plant Cell">
        <title>Transcriptional programming and functional interactions within the Phytophthora sojae RXLR effector repertoire.</title>
        <authorList>
            <person name="Wang Q."/>
            <person name="Han C."/>
            <person name="Ferreira A.O."/>
            <person name="Yu X."/>
            <person name="Ye W."/>
            <person name="Tripathy S."/>
            <person name="Kale S.D."/>
            <person name="Gu B."/>
            <person name="Sheng Y."/>
            <person name="Sui Y."/>
            <person name="Wang X."/>
            <person name="Zhang Z."/>
            <person name="Cheng B."/>
            <person name="Dong S."/>
            <person name="Shan W."/>
            <person name="Zheng X."/>
            <person name="Dou D."/>
            <person name="Tyler B.M."/>
            <person name="Wang Y."/>
        </authorList>
    </citation>
    <scope>IDENTIFICATION</scope>
    <scope>FUNCTION</scope>
    <scope>DOMAIN</scope>
</reference>
<reference key="3">
    <citation type="journal article" date="2019" name="Mol. Plant">
        <title>Phytophthora sojae effector PsAvh240 inhibits a host aspartic protease secretion to promote infection.</title>
        <authorList>
            <person name="Guo B."/>
            <person name="Wang H."/>
            <person name="Yang B."/>
            <person name="Jiang W."/>
            <person name="Jing M."/>
            <person name="Li H."/>
            <person name="Xia Y."/>
            <person name="Xu Y."/>
            <person name="Hu Q."/>
            <person name="Wang F."/>
            <person name="Yu F."/>
            <person name="Wang Y."/>
            <person name="Ye W."/>
            <person name="Dong S."/>
            <person name="Xing W."/>
            <person name="Wang Y."/>
        </authorList>
    </citation>
    <scope>X-RAY CRYSTALLOGRAPHY (2.3 ANGSTROMS) OF 58-194</scope>
    <scope>SUBUNIT</scope>
    <scope>FUNCTION</scope>
    <scope>INTERACTION WITH HOST AP1</scope>
    <scope>SUBCELLULAR LOCATION</scope>
    <scope>MUTAGENESIS OF 58-LEU--SER-108 AND TYR-180</scope>
</reference>
<sequence length="194" mass="22225">MRPYFTLLLALAFILACTNLVEADAGRVLETTTNEHARHLRTAVASVVDLPDDEDERLLGYNTVQLWRMRRTANKLMNGKLTTQKEAALKKWMASQQDKFLAKWLKSSSVYPDQVYSKLGLTKLGASAKSSPNYQLYEKYTEALLQRWTNFKASPDTVYKSLRLDKLGAKAPQSPSYPMYEKYLQTFFRNQPAN</sequence>
<protein>
    <recommendedName>
        <fullName evidence="5">RxLR effector protein Avh240</fullName>
    </recommendedName>
    <alternativeName>
        <fullName evidence="5">Avirulence homolog protein 2402</fullName>
    </alternativeName>
</protein>
<accession>G5A8M1</accession>
<name>AV240_PHYSP</name>
<evidence type="ECO:0000250" key="1">
    <source>
        <dbReference type="UniProtKB" id="E0W4T1"/>
    </source>
</evidence>
<evidence type="ECO:0000255" key="2"/>
<evidence type="ECO:0000269" key="3">
    <source>
    </source>
</evidence>
<evidence type="ECO:0000269" key="4">
    <source>
    </source>
</evidence>
<evidence type="ECO:0000303" key="5">
    <source>
    </source>
</evidence>
<evidence type="ECO:0000305" key="6"/>
<evidence type="ECO:0000305" key="7">
    <source>
    </source>
</evidence>
<evidence type="ECO:0000305" key="8">
    <source>
    </source>
</evidence>
<dbReference type="EMBL" id="JH159161">
    <property type="protein sequence ID" value="EGZ08247.1"/>
    <property type="molecule type" value="Genomic_DNA"/>
</dbReference>
<dbReference type="RefSeq" id="XP_009536419.1">
    <property type="nucleotide sequence ID" value="XM_009538124.1"/>
</dbReference>
<dbReference type="PDB" id="6J8L">
    <property type="method" value="X-ray"/>
    <property type="resolution" value="2.30 A"/>
    <property type="chains" value="A/B=58-135"/>
</dbReference>
<dbReference type="PDBsum" id="6J8L"/>
<dbReference type="SMR" id="G5A8M1"/>
<dbReference type="STRING" id="1094619.G5A8M1"/>
<dbReference type="EnsemblProtists" id="EGZ08247">
    <property type="protein sequence ID" value="EGZ08247"/>
    <property type="gene ID" value="PHYSODRAFT_288823"/>
</dbReference>
<dbReference type="GeneID" id="20640723"/>
<dbReference type="KEGG" id="psoj:PHYSODRAFT_288823"/>
<dbReference type="InParanoid" id="G5A8M1"/>
<dbReference type="OMA" id="TNEHARH"/>
<dbReference type="Proteomes" id="UP000002640">
    <property type="component" value="Unassembled WGS sequence"/>
</dbReference>
<dbReference type="GO" id="GO:0005576">
    <property type="term" value="C:extracellular region"/>
    <property type="evidence" value="ECO:0007669"/>
    <property type="project" value="UniProtKB-SubCell"/>
</dbReference>
<dbReference type="GO" id="GO:0020002">
    <property type="term" value="C:host cell plasma membrane"/>
    <property type="evidence" value="ECO:0007669"/>
    <property type="project" value="UniProtKB-SubCell"/>
</dbReference>
<dbReference type="GO" id="GO:0016020">
    <property type="term" value="C:membrane"/>
    <property type="evidence" value="ECO:0007669"/>
    <property type="project" value="UniProtKB-KW"/>
</dbReference>
<gene>
    <name evidence="5" type="primary">Avh240</name>
    <name type="ORF">PHYSODRAFT_288823</name>
</gene>
<organism>
    <name type="scientific">Phytophthora sojae (strain P6497)</name>
    <name type="common">Soybean stem and root rot agent</name>
    <name type="synonym">Phytophthora megasperma f. sp. glycines</name>
    <dbReference type="NCBI Taxonomy" id="1094619"/>
    <lineage>
        <taxon>Eukaryota</taxon>
        <taxon>Sar</taxon>
        <taxon>Stramenopiles</taxon>
        <taxon>Oomycota</taxon>
        <taxon>Peronosporales</taxon>
        <taxon>Peronosporaceae</taxon>
        <taxon>Phytophthora</taxon>
    </lineage>
</organism>
<proteinExistence type="evidence at protein level"/>
<feature type="signal peptide" evidence="2">
    <location>
        <begin position="1"/>
        <end position="23"/>
    </location>
</feature>
<feature type="chain" id="PRO_5003473077" description="RxLR effector protein Avh240">
    <location>
        <begin position="24"/>
        <end position="194"/>
    </location>
</feature>
<feature type="region of interest" description="Host plasma membrane-binding" evidence="1">
    <location>
        <begin position="58"/>
        <end position="108"/>
    </location>
</feature>
<feature type="short sequence motif" description="RxLR-dEER" evidence="8">
    <location>
        <begin position="38"/>
        <end position="57"/>
    </location>
</feature>
<feature type="mutagenesis site" description="Impairs host plasma membrane localization, host AP1-binding, and virulence." evidence="4">
    <location>
        <begin position="58"/>
        <end position="108"/>
    </location>
</feature>
<feature type="mutagenesis site" description="Impairs homodimerization and affect soybean infection." evidence="4">
    <original>Y</original>
    <variation>A</variation>
    <location>
        <position position="180"/>
    </location>
</feature>
<keyword id="KW-0002">3D-structure</keyword>
<keyword id="KW-1032">Host cell membrane</keyword>
<keyword id="KW-1043">Host membrane</keyword>
<keyword id="KW-0472">Membrane</keyword>
<keyword id="KW-1185">Reference proteome</keyword>
<keyword id="KW-0964">Secreted</keyword>
<keyword id="KW-0732">Signal</keyword>
<keyword id="KW-0843">Virulence</keyword>